<keyword id="KW-0963">Cytoplasm</keyword>
<keyword id="KW-0444">Lipid biosynthesis</keyword>
<keyword id="KW-0443">Lipid metabolism</keyword>
<keyword id="KW-0520">NAD</keyword>
<keyword id="KW-0521">NADP</keyword>
<keyword id="KW-0547">Nucleotide-binding</keyword>
<keyword id="KW-0560">Oxidoreductase</keyword>
<keyword id="KW-0594">Phospholipid biosynthesis</keyword>
<keyword id="KW-1208">Phospholipid metabolism</keyword>
<keyword id="KW-1185">Reference proteome</keyword>
<proteinExistence type="inferred from homology"/>
<name>GPDA_STAA8</name>
<sequence length="332" mass="36071">MTKITVFGMGSFGTALANVLAENGHDVLMWGKNQDAVDELNTCHTNKKYLKYAKLDVNIIATSDMTKAIQFADIYLMALPTKAMREVASQINDKLTSKKTFIHVAKGIENGTFKRVSEMIEDSISPEYNAGIGVLSGPSHAEEVVVKQPTTVAASSKDKSVSKLTQDLFMNDYLRVYTNDDLIGVELGGALKNIIAVASGIVAGIGYGDNAKAALMTRGLAEISRLGEKLGADPMTFLGLGGIGDLIVTCTSTHSRNFTLGYKLGQGESMDQALSEMNMVVEGIYTTKSVYHLAKEKNVDMPITNALYRVLFENISVKECVKDLMERDKKSE</sequence>
<evidence type="ECO:0000255" key="1">
    <source>
        <dbReference type="HAMAP-Rule" id="MF_00394"/>
    </source>
</evidence>
<feature type="chain" id="PRO_0000255377" description="Glycerol-3-phosphate dehydrogenase [NAD(P)+]">
    <location>
        <begin position="1"/>
        <end position="332"/>
    </location>
</feature>
<feature type="active site" description="Proton acceptor" evidence="1">
    <location>
        <position position="192"/>
    </location>
</feature>
<feature type="binding site" evidence="1">
    <location>
        <position position="11"/>
    </location>
    <ligand>
        <name>NADPH</name>
        <dbReference type="ChEBI" id="CHEBI:57783"/>
    </ligand>
</feature>
<feature type="binding site" evidence="1">
    <location>
        <position position="12"/>
    </location>
    <ligand>
        <name>NADPH</name>
        <dbReference type="ChEBI" id="CHEBI:57783"/>
    </ligand>
</feature>
<feature type="binding site" evidence="1">
    <location>
        <position position="32"/>
    </location>
    <ligand>
        <name>NADPH</name>
        <dbReference type="ChEBI" id="CHEBI:57783"/>
    </ligand>
</feature>
<feature type="binding site" evidence="1">
    <location>
        <position position="106"/>
    </location>
    <ligand>
        <name>NADPH</name>
        <dbReference type="ChEBI" id="CHEBI:57783"/>
    </ligand>
</feature>
<feature type="binding site" evidence="1">
    <location>
        <position position="106"/>
    </location>
    <ligand>
        <name>sn-glycerol 3-phosphate</name>
        <dbReference type="ChEBI" id="CHEBI:57597"/>
    </ligand>
</feature>
<feature type="binding site" evidence="1">
    <location>
        <position position="137"/>
    </location>
    <ligand>
        <name>sn-glycerol 3-phosphate</name>
        <dbReference type="ChEBI" id="CHEBI:57597"/>
    </ligand>
</feature>
<feature type="binding site" evidence="1">
    <location>
        <position position="139"/>
    </location>
    <ligand>
        <name>sn-glycerol 3-phosphate</name>
        <dbReference type="ChEBI" id="CHEBI:57597"/>
    </ligand>
</feature>
<feature type="binding site" evidence="1">
    <location>
        <position position="141"/>
    </location>
    <ligand>
        <name>NADPH</name>
        <dbReference type="ChEBI" id="CHEBI:57783"/>
    </ligand>
</feature>
<feature type="binding site" evidence="1">
    <location>
        <position position="192"/>
    </location>
    <ligand>
        <name>sn-glycerol 3-phosphate</name>
        <dbReference type="ChEBI" id="CHEBI:57597"/>
    </ligand>
</feature>
<feature type="binding site" evidence="1">
    <location>
        <position position="245"/>
    </location>
    <ligand>
        <name>sn-glycerol 3-phosphate</name>
        <dbReference type="ChEBI" id="CHEBI:57597"/>
    </ligand>
</feature>
<feature type="binding site" evidence="1">
    <location>
        <position position="255"/>
    </location>
    <ligand>
        <name>sn-glycerol 3-phosphate</name>
        <dbReference type="ChEBI" id="CHEBI:57597"/>
    </ligand>
</feature>
<feature type="binding site" evidence="1">
    <location>
        <position position="256"/>
    </location>
    <ligand>
        <name>NADPH</name>
        <dbReference type="ChEBI" id="CHEBI:57783"/>
    </ligand>
</feature>
<feature type="binding site" evidence="1">
    <location>
        <position position="256"/>
    </location>
    <ligand>
        <name>sn-glycerol 3-phosphate</name>
        <dbReference type="ChEBI" id="CHEBI:57597"/>
    </ligand>
</feature>
<feature type="binding site" evidence="1">
    <location>
        <position position="257"/>
    </location>
    <ligand>
        <name>sn-glycerol 3-phosphate</name>
        <dbReference type="ChEBI" id="CHEBI:57597"/>
    </ligand>
</feature>
<feature type="binding site" evidence="1">
    <location>
        <position position="280"/>
    </location>
    <ligand>
        <name>NADPH</name>
        <dbReference type="ChEBI" id="CHEBI:57783"/>
    </ligand>
</feature>
<feature type="binding site" evidence="1">
    <location>
        <position position="282"/>
    </location>
    <ligand>
        <name>NADPH</name>
        <dbReference type="ChEBI" id="CHEBI:57783"/>
    </ligand>
</feature>
<gene>
    <name evidence="1" type="primary">gpsA</name>
    <name type="ordered locus">SAOUHSC_01491</name>
</gene>
<reference key="1">
    <citation type="book" date="2006" name="Gram positive pathogens, 2nd edition">
        <title>The Staphylococcus aureus NCTC 8325 genome.</title>
        <editorList>
            <person name="Fischetti V."/>
            <person name="Novick R."/>
            <person name="Ferretti J."/>
            <person name="Portnoy D."/>
            <person name="Rood J."/>
        </editorList>
        <authorList>
            <person name="Gillaspy A.F."/>
            <person name="Worrell V."/>
            <person name="Orvis J."/>
            <person name="Roe B.A."/>
            <person name="Dyer D.W."/>
            <person name="Iandolo J.J."/>
        </authorList>
    </citation>
    <scope>NUCLEOTIDE SEQUENCE [LARGE SCALE GENOMIC DNA]</scope>
    <source>
        <strain>NCTC 8325 / PS 47</strain>
    </source>
</reference>
<organism>
    <name type="scientific">Staphylococcus aureus (strain NCTC 8325 / PS 47)</name>
    <dbReference type="NCBI Taxonomy" id="93061"/>
    <lineage>
        <taxon>Bacteria</taxon>
        <taxon>Bacillati</taxon>
        <taxon>Bacillota</taxon>
        <taxon>Bacilli</taxon>
        <taxon>Bacillales</taxon>
        <taxon>Staphylococcaceae</taxon>
        <taxon>Staphylococcus</taxon>
    </lineage>
</organism>
<dbReference type="EC" id="1.1.1.94" evidence="1"/>
<dbReference type="EMBL" id="CP000253">
    <property type="protein sequence ID" value="ABD30576.1"/>
    <property type="molecule type" value="Genomic_DNA"/>
</dbReference>
<dbReference type="RefSeq" id="WP_000161738.1">
    <property type="nucleotide sequence ID" value="NZ_LS483365.1"/>
</dbReference>
<dbReference type="RefSeq" id="YP_500009.1">
    <property type="nucleotide sequence ID" value="NC_007795.1"/>
</dbReference>
<dbReference type="SMR" id="Q2FYG1"/>
<dbReference type="STRING" id="93061.SAOUHSC_01491"/>
<dbReference type="PaxDb" id="1280-SAXN108_1495"/>
<dbReference type="GeneID" id="3920246"/>
<dbReference type="KEGG" id="sao:SAOUHSC_01491"/>
<dbReference type="PATRIC" id="fig|93061.5.peg.1359"/>
<dbReference type="eggNOG" id="COG0240">
    <property type="taxonomic scope" value="Bacteria"/>
</dbReference>
<dbReference type="HOGENOM" id="CLU_033449_0_2_9"/>
<dbReference type="OrthoDB" id="9812273at2"/>
<dbReference type="UniPathway" id="UPA00940"/>
<dbReference type="PRO" id="PR:Q2FYG1"/>
<dbReference type="Proteomes" id="UP000008816">
    <property type="component" value="Chromosome"/>
</dbReference>
<dbReference type="GO" id="GO:0005829">
    <property type="term" value="C:cytosol"/>
    <property type="evidence" value="ECO:0000318"/>
    <property type="project" value="GO_Central"/>
</dbReference>
<dbReference type="GO" id="GO:0047952">
    <property type="term" value="F:glycerol-3-phosphate dehydrogenase [NAD(P)+] activity"/>
    <property type="evidence" value="ECO:0000318"/>
    <property type="project" value="GO_Central"/>
</dbReference>
<dbReference type="GO" id="GO:0051287">
    <property type="term" value="F:NAD binding"/>
    <property type="evidence" value="ECO:0007669"/>
    <property type="project" value="InterPro"/>
</dbReference>
<dbReference type="GO" id="GO:0005975">
    <property type="term" value="P:carbohydrate metabolic process"/>
    <property type="evidence" value="ECO:0007669"/>
    <property type="project" value="InterPro"/>
</dbReference>
<dbReference type="GO" id="GO:0046167">
    <property type="term" value="P:glycerol-3-phosphate biosynthetic process"/>
    <property type="evidence" value="ECO:0007669"/>
    <property type="project" value="UniProtKB-UniRule"/>
</dbReference>
<dbReference type="GO" id="GO:0046168">
    <property type="term" value="P:glycerol-3-phosphate catabolic process"/>
    <property type="evidence" value="ECO:0007669"/>
    <property type="project" value="InterPro"/>
</dbReference>
<dbReference type="GO" id="GO:0006072">
    <property type="term" value="P:glycerol-3-phosphate metabolic process"/>
    <property type="evidence" value="ECO:0000318"/>
    <property type="project" value="GO_Central"/>
</dbReference>
<dbReference type="GO" id="GO:0006650">
    <property type="term" value="P:glycerophospholipid metabolic process"/>
    <property type="evidence" value="ECO:0007669"/>
    <property type="project" value="UniProtKB-UniRule"/>
</dbReference>
<dbReference type="GO" id="GO:0008654">
    <property type="term" value="P:phospholipid biosynthetic process"/>
    <property type="evidence" value="ECO:0007669"/>
    <property type="project" value="UniProtKB-KW"/>
</dbReference>
<dbReference type="FunFam" id="1.10.1040.10:FF:000001">
    <property type="entry name" value="Glycerol-3-phosphate dehydrogenase [NAD(P)+]"/>
    <property type="match status" value="1"/>
</dbReference>
<dbReference type="FunFam" id="3.40.50.720:FF:000019">
    <property type="entry name" value="Glycerol-3-phosphate dehydrogenase [NAD(P)+]"/>
    <property type="match status" value="1"/>
</dbReference>
<dbReference type="Gene3D" id="1.10.1040.10">
    <property type="entry name" value="N-(1-d-carboxylethyl)-l-norvaline Dehydrogenase, domain 2"/>
    <property type="match status" value="1"/>
</dbReference>
<dbReference type="Gene3D" id="3.40.50.720">
    <property type="entry name" value="NAD(P)-binding Rossmann-like Domain"/>
    <property type="match status" value="1"/>
</dbReference>
<dbReference type="HAMAP" id="MF_00394">
    <property type="entry name" value="NAD_Glyc3P_dehydrog"/>
    <property type="match status" value="1"/>
</dbReference>
<dbReference type="InterPro" id="IPR008927">
    <property type="entry name" value="6-PGluconate_DH-like_C_sf"/>
</dbReference>
<dbReference type="InterPro" id="IPR013328">
    <property type="entry name" value="6PGD_dom2"/>
</dbReference>
<dbReference type="InterPro" id="IPR006168">
    <property type="entry name" value="G3P_DH_NAD-dep"/>
</dbReference>
<dbReference type="InterPro" id="IPR006109">
    <property type="entry name" value="G3P_DH_NAD-dep_C"/>
</dbReference>
<dbReference type="InterPro" id="IPR011128">
    <property type="entry name" value="G3P_DH_NAD-dep_N"/>
</dbReference>
<dbReference type="InterPro" id="IPR036291">
    <property type="entry name" value="NAD(P)-bd_dom_sf"/>
</dbReference>
<dbReference type="NCBIfam" id="NF000940">
    <property type="entry name" value="PRK00094.1-2"/>
    <property type="match status" value="1"/>
</dbReference>
<dbReference type="NCBIfam" id="NF000941">
    <property type="entry name" value="PRK00094.1-3"/>
    <property type="match status" value="1"/>
</dbReference>
<dbReference type="NCBIfam" id="NF000942">
    <property type="entry name" value="PRK00094.1-4"/>
    <property type="match status" value="1"/>
</dbReference>
<dbReference type="PANTHER" id="PTHR11728">
    <property type="entry name" value="GLYCEROL-3-PHOSPHATE DEHYDROGENASE"/>
    <property type="match status" value="1"/>
</dbReference>
<dbReference type="PANTHER" id="PTHR11728:SF1">
    <property type="entry name" value="GLYCEROL-3-PHOSPHATE DEHYDROGENASE [NAD(+)] 2, CHLOROPLASTIC"/>
    <property type="match status" value="1"/>
</dbReference>
<dbReference type="Pfam" id="PF07479">
    <property type="entry name" value="NAD_Gly3P_dh_C"/>
    <property type="match status" value="1"/>
</dbReference>
<dbReference type="Pfam" id="PF01210">
    <property type="entry name" value="NAD_Gly3P_dh_N"/>
    <property type="match status" value="1"/>
</dbReference>
<dbReference type="PIRSF" id="PIRSF000114">
    <property type="entry name" value="Glycerol-3-P_dh"/>
    <property type="match status" value="1"/>
</dbReference>
<dbReference type="PRINTS" id="PR00077">
    <property type="entry name" value="GPDHDRGNASE"/>
</dbReference>
<dbReference type="SUPFAM" id="SSF48179">
    <property type="entry name" value="6-phosphogluconate dehydrogenase C-terminal domain-like"/>
    <property type="match status" value="1"/>
</dbReference>
<dbReference type="SUPFAM" id="SSF51735">
    <property type="entry name" value="NAD(P)-binding Rossmann-fold domains"/>
    <property type="match status" value="1"/>
</dbReference>
<dbReference type="PROSITE" id="PS00957">
    <property type="entry name" value="NAD_G3PDH"/>
    <property type="match status" value="1"/>
</dbReference>
<protein>
    <recommendedName>
        <fullName evidence="1">Glycerol-3-phosphate dehydrogenase [NAD(P)+]</fullName>
        <ecNumber evidence="1">1.1.1.94</ecNumber>
    </recommendedName>
    <alternativeName>
        <fullName evidence="1">NAD(P)(+)-dependent glycerol-3-phosphate dehydrogenase</fullName>
    </alternativeName>
    <alternativeName>
        <fullName evidence="1">NAD(P)H-dependent dihydroxyacetone-phosphate reductase</fullName>
    </alternativeName>
</protein>
<accession>Q2FYG1</accession>
<comment type="function">
    <text evidence="1">Catalyzes the reduction of the glycolytic intermediate dihydroxyacetone phosphate (DHAP) to sn-glycerol 3-phosphate (G3P), the key precursor for phospholipid synthesis.</text>
</comment>
<comment type="catalytic activity">
    <reaction evidence="1">
        <text>sn-glycerol 3-phosphate + NAD(+) = dihydroxyacetone phosphate + NADH + H(+)</text>
        <dbReference type="Rhea" id="RHEA:11092"/>
        <dbReference type="ChEBI" id="CHEBI:15378"/>
        <dbReference type="ChEBI" id="CHEBI:57540"/>
        <dbReference type="ChEBI" id="CHEBI:57597"/>
        <dbReference type="ChEBI" id="CHEBI:57642"/>
        <dbReference type="ChEBI" id="CHEBI:57945"/>
        <dbReference type="EC" id="1.1.1.94"/>
    </reaction>
    <physiologicalReaction direction="right-to-left" evidence="1">
        <dbReference type="Rhea" id="RHEA:11094"/>
    </physiologicalReaction>
</comment>
<comment type="catalytic activity">
    <reaction evidence="1">
        <text>sn-glycerol 3-phosphate + NADP(+) = dihydroxyacetone phosphate + NADPH + H(+)</text>
        <dbReference type="Rhea" id="RHEA:11096"/>
        <dbReference type="ChEBI" id="CHEBI:15378"/>
        <dbReference type="ChEBI" id="CHEBI:57597"/>
        <dbReference type="ChEBI" id="CHEBI:57642"/>
        <dbReference type="ChEBI" id="CHEBI:57783"/>
        <dbReference type="ChEBI" id="CHEBI:58349"/>
        <dbReference type="EC" id="1.1.1.94"/>
    </reaction>
    <physiologicalReaction direction="right-to-left" evidence="1">
        <dbReference type="Rhea" id="RHEA:11098"/>
    </physiologicalReaction>
</comment>
<comment type="pathway">
    <text evidence="1">Membrane lipid metabolism; glycerophospholipid metabolism.</text>
</comment>
<comment type="subcellular location">
    <subcellularLocation>
        <location evidence="1">Cytoplasm</location>
    </subcellularLocation>
</comment>
<comment type="similarity">
    <text evidence="1">Belongs to the NAD-dependent glycerol-3-phosphate dehydrogenase family.</text>
</comment>